<keyword id="KW-1185">Reference proteome</keyword>
<dbReference type="EMBL" id="AE014075">
    <property type="protein sequence ID" value="AAN80333.1"/>
    <property type="molecule type" value="Genomic_DNA"/>
</dbReference>
<dbReference type="RefSeq" id="WP_000018633.1">
    <property type="nucleotide sequence ID" value="NZ_CP051263.1"/>
</dbReference>
<dbReference type="SMR" id="P64456"/>
<dbReference type="STRING" id="199310.c1871"/>
<dbReference type="GeneID" id="93775594"/>
<dbReference type="KEGG" id="ecc:c1871"/>
<dbReference type="eggNOG" id="ENOG5032T8Y">
    <property type="taxonomic scope" value="Bacteria"/>
</dbReference>
<dbReference type="HOGENOM" id="CLU_195139_0_0_6"/>
<dbReference type="BioCyc" id="ECOL199310:C1871-MONOMER"/>
<dbReference type="Proteomes" id="UP000001410">
    <property type="component" value="Chromosome"/>
</dbReference>
<dbReference type="InterPro" id="IPR019671">
    <property type="entry name" value="DUF2526"/>
</dbReference>
<dbReference type="Pfam" id="PF10735">
    <property type="entry name" value="DUF2526"/>
    <property type="match status" value="1"/>
</dbReference>
<reference key="1">
    <citation type="journal article" date="2002" name="Proc. Natl. Acad. Sci. U.S.A.">
        <title>Extensive mosaic structure revealed by the complete genome sequence of uropathogenic Escherichia coli.</title>
        <authorList>
            <person name="Welch R.A."/>
            <person name="Burland V."/>
            <person name="Plunkett G. III"/>
            <person name="Redford P."/>
            <person name="Roesch P."/>
            <person name="Rasko D."/>
            <person name="Buckles E.L."/>
            <person name="Liou S.-R."/>
            <person name="Boutin A."/>
            <person name="Hackett J."/>
            <person name="Stroud D."/>
            <person name="Mayhew G.F."/>
            <person name="Rose D.J."/>
            <person name="Zhou S."/>
            <person name="Schwartz D.C."/>
            <person name="Perna N.T."/>
            <person name="Mobley H.L.T."/>
            <person name="Donnenberg M.S."/>
            <person name="Blattner F.R."/>
        </authorList>
    </citation>
    <scope>NUCLEOTIDE SEQUENCE [LARGE SCALE GENOMIC DNA]</scope>
    <source>
        <strain>CFT073 / ATCC 700928 / UPEC</strain>
    </source>
</reference>
<evidence type="ECO:0000256" key="1">
    <source>
        <dbReference type="SAM" id="MobiDB-lite"/>
    </source>
</evidence>
<gene>
    <name type="primary">ydcY</name>
    <name type="ordered locus">c1871</name>
</gene>
<proteinExistence type="predicted"/>
<protein>
    <recommendedName>
        <fullName>Uncharacterized protein YdcY</fullName>
    </recommendedName>
</protein>
<accession>P64456</accession>
<accession>P76110</accession>
<organism>
    <name type="scientific">Escherichia coli O6:H1 (strain CFT073 / ATCC 700928 / UPEC)</name>
    <dbReference type="NCBI Taxonomy" id="199310"/>
    <lineage>
        <taxon>Bacteria</taxon>
        <taxon>Pseudomonadati</taxon>
        <taxon>Pseudomonadota</taxon>
        <taxon>Gammaproteobacteria</taxon>
        <taxon>Enterobacterales</taxon>
        <taxon>Enterobacteriaceae</taxon>
        <taxon>Escherichia</taxon>
    </lineage>
</organism>
<feature type="chain" id="PRO_0000168937" description="Uncharacterized protein YdcY">
    <location>
        <begin position="1"/>
        <end position="77"/>
    </location>
</feature>
<feature type="region of interest" description="Disordered" evidence="1">
    <location>
        <begin position="54"/>
        <end position="77"/>
    </location>
</feature>
<feature type="compositionally biased region" description="Basic and acidic residues" evidence="1">
    <location>
        <begin position="59"/>
        <end position="70"/>
    </location>
</feature>
<sequence length="77" mass="8800">MSHLDEVIARVDAAIEESVIAHMNELLIALSDDAELSREDRYTQQQRLRTAIAHHGRKHKEDMEARHEQLTKGGTIL</sequence>
<name>YDCY_ECOL6</name>